<keyword id="KW-1017">Isopeptide bond</keyword>
<keyword id="KW-0479">Metal-binding</keyword>
<keyword id="KW-1185">Reference proteome</keyword>
<keyword id="KW-0687">Ribonucleoprotein</keyword>
<keyword id="KW-0689">Ribosomal protein</keyword>
<keyword id="KW-0862">Zinc</keyword>
<keyword id="KW-0863">Zinc-finger</keyword>
<organism>
    <name type="scientific">Caenorhabditis briggsae</name>
    <dbReference type="NCBI Taxonomy" id="6238"/>
    <lineage>
        <taxon>Eukaryota</taxon>
        <taxon>Metazoa</taxon>
        <taxon>Ecdysozoa</taxon>
        <taxon>Nematoda</taxon>
        <taxon>Chromadorea</taxon>
        <taxon>Rhabditida</taxon>
        <taxon>Rhabditina</taxon>
        <taxon>Rhabditomorpha</taxon>
        <taxon>Rhabditoidea</taxon>
        <taxon>Rhabditidae</taxon>
        <taxon>Peloderinae</taxon>
        <taxon>Caenorhabditis</taxon>
    </lineage>
</organism>
<dbReference type="EMBL" id="L16529">
    <property type="protein sequence ID" value="AAA28160.1"/>
    <property type="molecule type" value="mRNA"/>
</dbReference>
<dbReference type="EMBL" id="HE601367">
    <property type="protein sequence ID" value="CAP39048.1"/>
    <property type="molecule type" value="Genomic_DNA"/>
</dbReference>
<dbReference type="PIR" id="B48766">
    <property type="entry name" value="B48766"/>
</dbReference>
<dbReference type="SMR" id="P37164"/>
<dbReference type="FunCoup" id="P37164">
    <property type="interactions" value="1843"/>
</dbReference>
<dbReference type="STRING" id="6238.P37164"/>
<dbReference type="EnsemblMetazoa" id="CBG22466b.1">
    <property type="protein sequence ID" value="CBG22466b.1"/>
    <property type="gene ID" value="WBGene00041019"/>
</dbReference>
<dbReference type="KEGG" id="cbr:CBG_22466"/>
<dbReference type="CTD" id="8583048"/>
<dbReference type="WormBase" id="CBG22466a">
    <property type="protein sequence ID" value="CBP39810"/>
    <property type="gene ID" value="WBGene00041019"/>
    <property type="gene designation" value="Cbr-ubl-1"/>
</dbReference>
<dbReference type="eggNOG" id="KOG0004">
    <property type="taxonomic scope" value="Eukaryota"/>
</dbReference>
<dbReference type="HOGENOM" id="CLU_010412_2_0_1"/>
<dbReference type="InParanoid" id="P37164"/>
<dbReference type="Proteomes" id="UP000008549">
    <property type="component" value="Unassembled WGS sequence"/>
</dbReference>
<dbReference type="GO" id="GO:0005737">
    <property type="term" value="C:cytoplasm"/>
    <property type="evidence" value="ECO:0000318"/>
    <property type="project" value="GO_Central"/>
</dbReference>
<dbReference type="GO" id="GO:0005634">
    <property type="term" value="C:nucleus"/>
    <property type="evidence" value="ECO:0000318"/>
    <property type="project" value="GO_Central"/>
</dbReference>
<dbReference type="GO" id="GO:1990904">
    <property type="term" value="C:ribonucleoprotein complex"/>
    <property type="evidence" value="ECO:0007669"/>
    <property type="project" value="UniProtKB-KW"/>
</dbReference>
<dbReference type="GO" id="GO:0005840">
    <property type="term" value="C:ribosome"/>
    <property type="evidence" value="ECO:0007669"/>
    <property type="project" value="UniProtKB-KW"/>
</dbReference>
<dbReference type="GO" id="GO:0031386">
    <property type="term" value="F:protein tag activity"/>
    <property type="evidence" value="ECO:0000318"/>
    <property type="project" value="GO_Central"/>
</dbReference>
<dbReference type="GO" id="GO:0003735">
    <property type="term" value="F:structural constituent of ribosome"/>
    <property type="evidence" value="ECO:0007669"/>
    <property type="project" value="InterPro"/>
</dbReference>
<dbReference type="GO" id="GO:0031625">
    <property type="term" value="F:ubiquitin protein ligase binding"/>
    <property type="evidence" value="ECO:0000318"/>
    <property type="project" value="GO_Central"/>
</dbReference>
<dbReference type="GO" id="GO:0008270">
    <property type="term" value="F:zinc ion binding"/>
    <property type="evidence" value="ECO:0007669"/>
    <property type="project" value="UniProtKB-KW"/>
</dbReference>
<dbReference type="GO" id="GO:0019941">
    <property type="term" value="P:modification-dependent protein catabolic process"/>
    <property type="evidence" value="ECO:0000318"/>
    <property type="project" value="GO_Central"/>
</dbReference>
<dbReference type="GO" id="GO:0016567">
    <property type="term" value="P:protein ubiquitination"/>
    <property type="evidence" value="ECO:0000318"/>
    <property type="project" value="GO_Central"/>
</dbReference>
<dbReference type="GO" id="GO:0006412">
    <property type="term" value="P:translation"/>
    <property type="evidence" value="ECO:0007669"/>
    <property type="project" value="InterPro"/>
</dbReference>
<dbReference type="CDD" id="cd16107">
    <property type="entry name" value="Ubl_AtUPL5_like"/>
    <property type="match status" value="1"/>
</dbReference>
<dbReference type="Gene3D" id="6.20.50.150">
    <property type="match status" value="1"/>
</dbReference>
<dbReference type="Gene3D" id="3.10.20.90">
    <property type="entry name" value="Phosphatidylinositol 3-kinase Catalytic Subunit, Chain A, domain 1"/>
    <property type="match status" value="1"/>
</dbReference>
<dbReference type="InterPro" id="IPR002906">
    <property type="entry name" value="Ribosomal_eS31"/>
</dbReference>
<dbReference type="InterPro" id="IPR038582">
    <property type="entry name" value="Ribosomal_eS31_euk-type_sf"/>
</dbReference>
<dbReference type="InterPro" id="IPR011332">
    <property type="entry name" value="Ribosomal_zn-bd"/>
</dbReference>
<dbReference type="InterPro" id="IPR000626">
    <property type="entry name" value="Ubiquitin-like_dom"/>
</dbReference>
<dbReference type="InterPro" id="IPR029071">
    <property type="entry name" value="Ubiquitin-like_domsf"/>
</dbReference>
<dbReference type="InterPro" id="IPR019954">
    <property type="entry name" value="Ubiquitin_CS"/>
</dbReference>
<dbReference type="InterPro" id="IPR019956">
    <property type="entry name" value="Ubiquitin_dom"/>
</dbReference>
<dbReference type="InterPro" id="IPR050158">
    <property type="entry name" value="Ubiquitin_ubiquitin-like"/>
</dbReference>
<dbReference type="PANTHER" id="PTHR10666">
    <property type="entry name" value="UBIQUITIN"/>
    <property type="match status" value="1"/>
</dbReference>
<dbReference type="Pfam" id="PF01599">
    <property type="entry name" value="Ribosomal_S27"/>
    <property type="match status" value="1"/>
</dbReference>
<dbReference type="Pfam" id="PF00240">
    <property type="entry name" value="ubiquitin"/>
    <property type="match status" value="1"/>
</dbReference>
<dbReference type="PRINTS" id="PR00348">
    <property type="entry name" value="UBIQUITIN"/>
</dbReference>
<dbReference type="SMART" id="SM01402">
    <property type="entry name" value="Ribosomal_S27"/>
    <property type="match status" value="1"/>
</dbReference>
<dbReference type="SMART" id="SM00213">
    <property type="entry name" value="UBQ"/>
    <property type="match status" value="1"/>
</dbReference>
<dbReference type="SUPFAM" id="SSF54236">
    <property type="entry name" value="Ubiquitin-like"/>
    <property type="match status" value="1"/>
</dbReference>
<dbReference type="SUPFAM" id="SSF57829">
    <property type="entry name" value="Zn-binding ribosomal proteins"/>
    <property type="match status" value="1"/>
</dbReference>
<dbReference type="PROSITE" id="PS00299">
    <property type="entry name" value="UBIQUITIN_1"/>
    <property type="match status" value="1"/>
</dbReference>
<dbReference type="PROSITE" id="PS50053">
    <property type="entry name" value="UBIQUITIN_2"/>
    <property type="match status" value="1"/>
</dbReference>
<proteinExistence type="evidence at protein level"/>
<sequence>MVFVKTLNRTLYLEVAANEDVLSIKQKIEAAEGIPSAEQRLVFAGRQLEDSDCGLDAEATIYVNLELLGGAKKRKKKVYTTPKKNKRKPKKVKLAVLKYYKVDENGKITRLRKECQQPSCGGGVFMAQHANRHYCGRCHDTLVVDTATAAATSGEKGGKKGKK</sequence>
<comment type="similarity">
    <text evidence="2">In the N-terminal section; belongs to the ubiquitin family.</text>
</comment>
<comment type="similarity">
    <text evidence="2">In the C-terminal section; belongs to the eukaryotic ribosomal protein eS31 family.</text>
</comment>
<name>RS27A_CAEBR</name>
<accession>P37164</accession>
<accession>A8Y2C7</accession>
<accession>Q07371</accession>
<accession>Q60P07</accession>
<protein>
    <recommendedName>
        <fullName evidence="2">Ubiquitin-like protein 1-ribosomal protein eS31 fusion protein</fullName>
    </recommendedName>
    <component>
        <recommendedName>
            <fullName>Ubiquitin-like protein 1</fullName>
        </recommendedName>
    </component>
    <component>
        <recommendedName>
            <fullName evidence="2">Small ribosomal subunit protein eS31</fullName>
        </recommendedName>
        <alternativeName>
            <fullName>40S ribosomal protein S27a</fullName>
        </alternativeName>
    </component>
</protein>
<feature type="chain" id="PRO_0000114888" description="Ubiquitin-like protein 1">
    <location>
        <begin position="1"/>
        <end position="70"/>
    </location>
</feature>
<feature type="chain" id="PRO_0000137667" description="Small ribosomal subunit protein eS31">
    <location>
        <begin position="71"/>
        <end position="163"/>
    </location>
</feature>
<feature type="domain" description="Ubiquitin-like" evidence="1">
    <location>
        <begin position="1"/>
        <end position="70"/>
    </location>
</feature>
<feature type="zinc finger region" description="C4-type">
    <location>
        <begin position="115"/>
        <end position="138"/>
    </location>
</feature>
<feature type="cross-link" description="Glycyl lysine isopeptide (Gly-Lys) (interchain with K-? in acceptor proteins)">
    <location>
        <position position="70"/>
    </location>
</feature>
<feature type="sequence conflict" description="In Ref. 2; CAP39048." evidence="2" ref="2">
    <original>V</original>
    <variation>GSII</variation>
    <location>
        <position position="102"/>
    </location>
</feature>
<gene>
    <name type="primary">ubl-1</name>
    <name type="ORF">CBG22466</name>
</gene>
<evidence type="ECO:0000255" key="1">
    <source>
        <dbReference type="PROSITE-ProRule" id="PRU00214"/>
    </source>
</evidence>
<evidence type="ECO:0000305" key="2"/>
<reference key="1">
    <citation type="journal article" date="1993" name="J. Biol. Chem.">
        <title>Novel ubiquitin-like ribosomal protein fusion genes from the nematodes Caenorhabditis elegans and Caenorhabditis briggsae.</title>
        <authorList>
            <person name="Jones D."/>
            <person name="Candido E.P.M."/>
        </authorList>
    </citation>
    <scope>NUCLEOTIDE SEQUENCE [MRNA]</scope>
    <source>
        <tissue>Embryo</tissue>
    </source>
</reference>
<reference key="2">
    <citation type="journal article" date="2003" name="PLoS Biol.">
        <title>The genome sequence of Caenorhabditis briggsae: a platform for comparative genomics.</title>
        <authorList>
            <person name="Stein L.D."/>
            <person name="Bao Z."/>
            <person name="Blasiar D."/>
            <person name="Blumenthal T."/>
            <person name="Brent M.R."/>
            <person name="Chen N."/>
            <person name="Chinwalla A."/>
            <person name="Clarke L."/>
            <person name="Clee C."/>
            <person name="Coghlan A."/>
            <person name="Coulson A."/>
            <person name="D'Eustachio P."/>
            <person name="Fitch D.H.A."/>
            <person name="Fulton L.A."/>
            <person name="Fulton R.E."/>
            <person name="Griffiths-Jones S."/>
            <person name="Harris T.W."/>
            <person name="Hillier L.W."/>
            <person name="Kamath R."/>
            <person name="Kuwabara P.E."/>
            <person name="Mardis E.R."/>
            <person name="Marra M.A."/>
            <person name="Miner T.L."/>
            <person name="Minx P."/>
            <person name="Mullikin J.C."/>
            <person name="Plumb R.W."/>
            <person name="Rogers J."/>
            <person name="Schein J.E."/>
            <person name="Sohrmann M."/>
            <person name="Spieth J."/>
            <person name="Stajich J.E."/>
            <person name="Wei C."/>
            <person name="Willey D."/>
            <person name="Wilson R.K."/>
            <person name="Durbin R.M."/>
            <person name="Waterston R.H."/>
        </authorList>
    </citation>
    <scope>NUCLEOTIDE SEQUENCE [LARGE SCALE GENOMIC DNA]</scope>
    <source>
        <strain>AF16</strain>
    </source>
</reference>